<dbReference type="EMBL" id="CP000890">
    <property type="protein sequence ID" value="ABX79040.1"/>
    <property type="molecule type" value="Genomic_DNA"/>
</dbReference>
<dbReference type="RefSeq" id="WP_005771530.1">
    <property type="nucleotide sequence ID" value="NC_010117.1"/>
</dbReference>
<dbReference type="SMR" id="A9NAX8"/>
<dbReference type="KEGG" id="cbs:COXBURSA331_A0345"/>
<dbReference type="HOGENOM" id="CLU_158491_1_2_6"/>
<dbReference type="GO" id="GO:0022625">
    <property type="term" value="C:cytosolic large ribosomal subunit"/>
    <property type="evidence" value="ECO:0007669"/>
    <property type="project" value="TreeGrafter"/>
</dbReference>
<dbReference type="GO" id="GO:0003735">
    <property type="term" value="F:structural constituent of ribosome"/>
    <property type="evidence" value="ECO:0007669"/>
    <property type="project" value="InterPro"/>
</dbReference>
<dbReference type="GO" id="GO:0006412">
    <property type="term" value="P:translation"/>
    <property type="evidence" value="ECO:0007669"/>
    <property type="project" value="UniProtKB-UniRule"/>
</dbReference>
<dbReference type="CDD" id="cd00427">
    <property type="entry name" value="Ribosomal_L29_HIP"/>
    <property type="match status" value="1"/>
</dbReference>
<dbReference type="FunFam" id="1.10.287.310:FF:000001">
    <property type="entry name" value="50S ribosomal protein L29"/>
    <property type="match status" value="1"/>
</dbReference>
<dbReference type="Gene3D" id="1.10.287.310">
    <property type="match status" value="1"/>
</dbReference>
<dbReference type="HAMAP" id="MF_00374">
    <property type="entry name" value="Ribosomal_uL29"/>
    <property type="match status" value="1"/>
</dbReference>
<dbReference type="InterPro" id="IPR050063">
    <property type="entry name" value="Ribosomal_protein_uL29"/>
</dbReference>
<dbReference type="InterPro" id="IPR001854">
    <property type="entry name" value="Ribosomal_uL29"/>
</dbReference>
<dbReference type="InterPro" id="IPR036049">
    <property type="entry name" value="Ribosomal_uL29_sf"/>
</dbReference>
<dbReference type="NCBIfam" id="TIGR00012">
    <property type="entry name" value="L29"/>
    <property type="match status" value="1"/>
</dbReference>
<dbReference type="PANTHER" id="PTHR10916">
    <property type="entry name" value="60S RIBOSOMAL PROTEIN L35/50S RIBOSOMAL PROTEIN L29"/>
    <property type="match status" value="1"/>
</dbReference>
<dbReference type="PANTHER" id="PTHR10916:SF0">
    <property type="entry name" value="LARGE RIBOSOMAL SUBUNIT PROTEIN UL29C"/>
    <property type="match status" value="1"/>
</dbReference>
<dbReference type="Pfam" id="PF00831">
    <property type="entry name" value="Ribosomal_L29"/>
    <property type="match status" value="1"/>
</dbReference>
<dbReference type="SUPFAM" id="SSF46561">
    <property type="entry name" value="Ribosomal protein L29 (L29p)"/>
    <property type="match status" value="1"/>
</dbReference>
<comment type="similarity">
    <text evidence="1">Belongs to the universal ribosomal protein uL29 family.</text>
</comment>
<feature type="chain" id="PRO_1000079882" description="Large ribosomal subunit protein uL29">
    <location>
        <begin position="1"/>
        <end position="65"/>
    </location>
</feature>
<organism>
    <name type="scientific">Coxiella burnetii (strain RSA 331 / Henzerling II)</name>
    <dbReference type="NCBI Taxonomy" id="360115"/>
    <lineage>
        <taxon>Bacteria</taxon>
        <taxon>Pseudomonadati</taxon>
        <taxon>Pseudomonadota</taxon>
        <taxon>Gammaproteobacteria</taxon>
        <taxon>Legionellales</taxon>
        <taxon>Coxiellaceae</taxon>
        <taxon>Coxiella</taxon>
    </lineage>
</organism>
<proteinExistence type="inferred from homology"/>
<sequence length="65" mass="7699">MNVNDLRNKTKAELKKELLELLKEQFNLRMQKGGGEAPRPHLFKRVRRDIARVKTLLGEKERNNE</sequence>
<reference key="1">
    <citation type="submission" date="2007-11" db="EMBL/GenBank/DDBJ databases">
        <title>Genome sequencing of phylogenetically and phenotypically diverse Coxiella burnetii isolates.</title>
        <authorList>
            <person name="Seshadri R."/>
            <person name="Samuel J.E."/>
        </authorList>
    </citation>
    <scope>NUCLEOTIDE SEQUENCE [LARGE SCALE GENOMIC DNA]</scope>
    <source>
        <strain>RSA 331 / Henzerling II</strain>
    </source>
</reference>
<name>RL29_COXBR</name>
<evidence type="ECO:0000255" key="1">
    <source>
        <dbReference type="HAMAP-Rule" id="MF_00374"/>
    </source>
</evidence>
<evidence type="ECO:0000305" key="2"/>
<gene>
    <name evidence="1" type="primary">rpmC</name>
    <name type="ordered locus">COXBURSA331_A0345</name>
</gene>
<keyword id="KW-0687">Ribonucleoprotein</keyword>
<keyword id="KW-0689">Ribosomal protein</keyword>
<accession>A9NAX8</accession>
<protein>
    <recommendedName>
        <fullName evidence="1">Large ribosomal subunit protein uL29</fullName>
    </recommendedName>
    <alternativeName>
        <fullName evidence="2">50S ribosomal protein L29</fullName>
    </alternativeName>
</protein>